<proteinExistence type="inferred from homology"/>
<protein>
    <recommendedName>
        <fullName evidence="1">Small ribosomal subunit protein bS20</fullName>
    </recommendedName>
    <alternativeName>
        <fullName evidence="3">30S ribosomal protein S20</fullName>
    </alternativeName>
</protein>
<comment type="function">
    <text evidence="1">Binds directly to 16S ribosomal RNA.</text>
</comment>
<comment type="similarity">
    <text evidence="1">Belongs to the bacterial ribosomal protein bS20 family.</text>
</comment>
<name>RS20_METCA</name>
<dbReference type="EMBL" id="AE017282">
    <property type="protein sequence ID" value="AAU91763.1"/>
    <property type="molecule type" value="Genomic_DNA"/>
</dbReference>
<dbReference type="RefSeq" id="WP_010961480.1">
    <property type="nucleotide sequence ID" value="NC_002977.6"/>
</dbReference>
<dbReference type="SMR" id="Q605N0"/>
<dbReference type="STRING" id="243233.MCA2250"/>
<dbReference type="GeneID" id="88224456"/>
<dbReference type="KEGG" id="mca:MCA2250"/>
<dbReference type="eggNOG" id="COG0268">
    <property type="taxonomic scope" value="Bacteria"/>
</dbReference>
<dbReference type="HOGENOM" id="CLU_160655_4_0_6"/>
<dbReference type="Proteomes" id="UP000006821">
    <property type="component" value="Chromosome"/>
</dbReference>
<dbReference type="GO" id="GO:0005829">
    <property type="term" value="C:cytosol"/>
    <property type="evidence" value="ECO:0007669"/>
    <property type="project" value="TreeGrafter"/>
</dbReference>
<dbReference type="GO" id="GO:0015935">
    <property type="term" value="C:small ribosomal subunit"/>
    <property type="evidence" value="ECO:0007669"/>
    <property type="project" value="TreeGrafter"/>
</dbReference>
<dbReference type="GO" id="GO:0070181">
    <property type="term" value="F:small ribosomal subunit rRNA binding"/>
    <property type="evidence" value="ECO:0007669"/>
    <property type="project" value="TreeGrafter"/>
</dbReference>
<dbReference type="GO" id="GO:0003735">
    <property type="term" value="F:structural constituent of ribosome"/>
    <property type="evidence" value="ECO:0007669"/>
    <property type="project" value="InterPro"/>
</dbReference>
<dbReference type="GO" id="GO:0006412">
    <property type="term" value="P:translation"/>
    <property type="evidence" value="ECO:0007669"/>
    <property type="project" value="UniProtKB-UniRule"/>
</dbReference>
<dbReference type="FunFam" id="1.20.58.110:FF:000001">
    <property type="entry name" value="30S ribosomal protein S20"/>
    <property type="match status" value="1"/>
</dbReference>
<dbReference type="Gene3D" id="1.20.58.110">
    <property type="entry name" value="Ribosomal protein S20"/>
    <property type="match status" value="1"/>
</dbReference>
<dbReference type="HAMAP" id="MF_00500">
    <property type="entry name" value="Ribosomal_bS20"/>
    <property type="match status" value="1"/>
</dbReference>
<dbReference type="InterPro" id="IPR002583">
    <property type="entry name" value="Ribosomal_bS20"/>
</dbReference>
<dbReference type="InterPro" id="IPR036510">
    <property type="entry name" value="Ribosomal_bS20_sf"/>
</dbReference>
<dbReference type="NCBIfam" id="TIGR00029">
    <property type="entry name" value="S20"/>
    <property type="match status" value="1"/>
</dbReference>
<dbReference type="PANTHER" id="PTHR33398">
    <property type="entry name" value="30S RIBOSOMAL PROTEIN S20"/>
    <property type="match status" value="1"/>
</dbReference>
<dbReference type="PANTHER" id="PTHR33398:SF1">
    <property type="entry name" value="SMALL RIBOSOMAL SUBUNIT PROTEIN BS20C"/>
    <property type="match status" value="1"/>
</dbReference>
<dbReference type="Pfam" id="PF01649">
    <property type="entry name" value="Ribosomal_S20p"/>
    <property type="match status" value="1"/>
</dbReference>
<dbReference type="SUPFAM" id="SSF46992">
    <property type="entry name" value="Ribosomal protein S20"/>
    <property type="match status" value="1"/>
</dbReference>
<organism>
    <name type="scientific">Methylococcus capsulatus (strain ATCC 33009 / NCIMB 11132 / Bath)</name>
    <dbReference type="NCBI Taxonomy" id="243233"/>
    <lineage>
        <taxon>Bacteria</taxon>
        <taxon>Pseudomonadati</taxon>
        <taxon>Pseudomonadota</taxon>
        <taxon>Gammaproteobacteria</taxon>
        <taxon>Methylococcales</taxon>
        <taxon>Methylococcaceae</taxon>
        <taxon>Methylococcus</taxon>
    </lineage>
</organism>
<evidence type="ECO:0000255" key="1">
    <source>
        <dbReference type="HAMAP-Rule" id="MF_00500"/>
    </source>
</evidence>
<evidence type="ECO:0000256" key="2">
    <source>
        <dbReference type="SAM" id="MobiDB-lite"/>
    </source>
</evidence>
<evidence type="ECO:0000305" key="3"/>
<gene>
    <name evidence="1" type="primary">rpsT</name>
    <name type="ordered locus">MCA2250</name>
</gene>
<sequence length="92" mass="10061">MANIASAKKRARQAENNRAHNAALRSRLRTYIKKVILAVDSGDLTKAQEAFRQAVPIIDSSVNKGLIHRNKAARSKSRLNARVKALALQAAS</sequence>
<reference key="1">
    <citation type="journal article" date="2004" name="PLoS Biol.">
        <title>Genomic insights into methanotrophy: the complete genome sequence of Methylococcus capsulatus (Bath).</title>
        <authorList>
            <person name="Ward N.L."/>
            <person name="Larsen O."/>
            <person name="Sakwa J."/>
            <person name="Bruseth L."/>
            <person name="Khouri H.M."/>
            <person name="Durkin A.S."/>
            <person name="Dimitrov G."/>
            <person name="Jiang L."/>
            <person name="Scanlan D."/>
            <person name="Kang K.H."/>
            <person name="Lewis M.R."/>
            <person name="Nelson K.E."/>
            <person name="Methe B.A."/>
            <person name="Wu M."/>
            <person name="Heidelberg J.F."/>
            <person name="Paulsen I.T."/>
            <person name="Fouts D.E."/>
            <person name="Ravel J."/>
            <person name="Tettelin H."/>
            <person name="Ren Q."/>
            <person name="Read T.D."/>
            <person name="DeBoy R.T."/>
            <person name="Seshadri R."/>
            <person name="Salzberg S.L."/>
            <person name="Jensen H.B."/>
            <person name="Birkeland N.K."/>
            <person name="Nelson W.C."/>
            <person name="Dodson R.J."/>
            <person name="Grindhaug S.H."/>
            <person name="Holt I.E."/>
            <person name="Eidhammer I."/>
            <person name="Jonasen I."/>
            <person name="Vanaken S."/>
            <person name="Utterback T.R."/>
            <person name="Feldblyum T.V."/>
            <person name="Fraser C.M."/>
            <person name="Lillehaug J.R."/>
            <person name="Eisen J.A."/>
        </authorList>
    </citation>
    <scope>NUCLEOTIDE SEQUENCE [LARGE SCALE GENOMIC DNA]</scope>
    <source>
        <strain>ATCC 33009 / NCIMB 11132 / Bath</strain>
    </source>
</reference>
<feature type="chain" id="PRO_0000167988" description="Small ribosomal subunit protein bS20">
    <location>
        <begin position="1"/>
        <end position="92"/>
    </location>
</feature>
<feature type="region of interest" description="Disordered" evidence="2">
    <location>
        <begin position="1"/>
        <end position="20"/>
    </location>
</feature>
<accession>Q605N0</accession>
<keyword id="KW-1185">Reference proteome</keyword>
<keyword id="KW-0687">Ribonucleoprotein</keyword>
<keyword id="KW-0689">Ribosomal protein</keyword>
<keyword id="KW-0694">RNA-binding</keyword>
<keyword id="KW-0699">rRNA-binding</keyword>